<keyword id="KW-0175">Coiled coil</keyword>
<keyword id="KW-0238">DNA-binding</keyword>
<keyword id="KW-0539">Nucleus</keyword>
<keyword id="KW-1185">Reference proteome</keyword>
<keyword id="KW-0804">Transcription</keyword>
<keyword id="KW-0805">Transcription regulation</keyword>
<dbReference type="EMBL" id="AP001539">
    <property type="protein sequence ID" value="BAD81274.1"/>
    <property type="molecule type" value="Genomic_DNA"/>
</dbReference>
<dbReference type="EMBL" id="AP008207">
    <property type="protein sequence ID" value="BAF04444.1"/>
    <property type="molecule type" value="Genomic_DNA"/>
</dbReference>
<dbReference type="EMBL" id="AP014957">
    <property type="protein sequence ID" value="BAS71232.1"/>
    <property type="molecule type" value="Genomic_DNA"/>
</dbReference>
<dbReference type="EMBL" id="CM000138">
    <property type="protein sequence ID" value="EAZ11184.1"/>
    <property type="molecule type" value="Genomic_DNA"/>
</dbReference>
<dbReference type="RefSeq" id="XP_015613020.1">
    <property type="nucleotide sequence ID" value="XM_015757534.1"/>
</dbReference>
<dbReference type="SMR" id="Q5NB82"/>
<dbReference type="FunCoup" id="Q5NB82">
    <property type="interactions" value="1287"/>
</dbReference>
<dbReference type="STRING" id="39947.Q5NB82"/>
<dbReference type="PaxDb" id="39947-Q5NB82"/>
<dbReference type="EnsemblPlants" id="Os01t0236700-01">
    <property type="protein sequence ID" value="Os01t0236700-01"/>
    <property type="gene ID" value="Os01g0236700"/>
</dbReference>
<dbReference type="Gramene" id="Os01t0236700-01">
    <property type="protein sequence ID" value="Os01t0236700-01"/>
    <property type="gene ID" value="Os01g0236700"/>
</dbReference>
<dbReference type="KEGG" id="dosa:Os01g0236700"/>
<dbReference type="eggNOG" id="ENOG502QRQ2">
    <property type="taxonomic scope" value="Eukaryota"/>
</dbReference>
<dbReference type="HOGENOM" id="CLU_008971_0_0_1"/>
<dbReference type="InParanoid" id="Q5NB82"/>
<dbReference type="OMA" id="VWAPVKE"/>
<dbReference type="OrthoDB" id="6270329at2759"/>
<dbReference type="Proteomes" id="UP000000763">
    <property type="component" value="Chromosome 1"/>
</dbReference>
<dbReference type="Proteomes" id="UP000007752">
    <property type="component" value="Chromosome 1"/>
</dbReference>
<dbReference type="Proteomes" id="UP000059680">
    <property type="component" value="Chromosome 1"/>
</dbReference>
<dbReference type="ExpressionAtlas" id="Q5NB82">
    <property type="expression patterns" value="baseline and differential"/>
</dbReference>
<dbReference type="GO" id="GO:0005634">
    <property type="term" value="C:nucleus"/>
    <property type="evidence" value="ECO:0007669"/>
    <property type="project" value="UniProtKB-SubCell"/>
</dbReference>
<dbReference type="GO" id="GO:0003677">
    <property type="term" value="F:DNA binding"/>
    <property type="evidence" value="ECO:0007669"/>
    <property type="project" value="UniProtKB-KW"/>
</dbReference>
<dbReference type="GO" id="GO:0003700">
    <property type="term" value="F:DNA-binding transcription factor activity"/>
    <property type="evidence" value="ECO:0007669"/>
    <property type="project" value="InterPro"/>
</dbReference>
<dbReference type="CDD" id="cd06407">
    <property type="entry name" value="PB1_NLP"/>
    <property type="match status" value="1"/>
</dbReference>
<dbReference type="Gene3D" id="3.10.20.90">
    <property type="entry name" value="Phosphatidylinositol 3-kinase Catalytic Subunit, Chain A, domain 1"/>
    <property type="match status" value="1"/>
</dbReference>
<dbReference type="InterPro" id="IPR045012">
    <property type="entry name" value="NLP"/>
</dbReference>
<dbReference type="InterPro" id="IPR055081">
    <property type="entry name" value="NLP1-9_GAF"/>
</dbReference>
<dbReference type="InterPro" id="IPR053793">
    <property type="entry name" value="PB1-like"/>
</dbReference>
<dbReference type="InterPro" id="IPR000270">
    <property type="entry name" value="PB1_dom"/>
</dbReference>
<dbReference type="InterPro" id="IPR034891">
    <property type="entry name" value="PB1_NLP"/>
</dbReference>
<dbReference type="InterPro" id="IPR003035">
    <property type="entry name" value="RWP-RK_dom"/>
</dbReference>
<dbReference type="PANTHER" id="PTHR32002:SF35">
    <property type="entry name" value="PROTEIN NLP6"/>
    <property type="match status" value="1"/>
</dbReference>
<dbReference type="PANTHER" id="PTHR32002">
    <property type="entry name" value="PROTEIN NLP8"/>
    <property type="match status" value="1"/>
</dbReference>
<dbReference type="Pfam" id="PF22922">
    <property type="entry name" value="GAF_NLP"/>
    <property type="match status" value="2"/>
</dbReference>
<dbReference type="Pfam" id="PF00564">
    <property type="entry name" value="PB1"/>
    <property type="match status" value="1"/>
</dbReference>
<dbReference type="Pfam" id="PF02042">
    <property type="entry name" value="RWP-RK"/>
    <property type="match status" value="1"/>
</dbReference>
<dbReference type="SMART" id="SM00666">
    <property type="entry name" value="PB1"/>
    <property type="match status" value="1"/>
</dbReference>
<dbReference type="SUPFAM" id="SSF54277">
    <property type="entry name" value="CAD &amp; PB1 domains"/>
    <property type="match status" value="1"/>
</dbReference>
<dbReference type="PROSITE" id="PS51745">
    <property type="entry name" value="PB1"/>
    <property type="match status" value="1"/>
</dbReference>
<dbReference type="PROSITE" id="PS51519">
    <property type="entry name" value="RWP_RK"/>
    <property type="match status" value="1"/>
</dbReference>
<reference key="1">
    <citation type="journal article" date="2002" name="Nature">
        <title>The genome sequence and structure of rice chromosome 1.</title>
        <authorList>
            <person name="Sasaki T."/>
            <person name="Matsumoto T."/>
            <person name="Yamamoto K."/>
            <person name="Sakata K."/>
            <person name="Baba T."/>
            <person name="Katayose Y."/>
            <person name="Wu J."/>
            <person name="Niimura Y."/>
            <person name="Cheng Z."/>
            <person name="Nagamura Y."/>
            <person name="Antonio B.A."/>
            <person name="Kanamori H."/>
            <person name="Hosokawa S."/>
            <person name="Masukawa M."/>
            <person name="Arikawa K."/>
            <person name="Chiden Y."/>
            <person name="Hayashi M."/>
            <person name="Okamoto M."/>
            <person name="Ando T."/>
            <person name="Aoki H."/>
            <person name="Arita K."/>
            <person name="Hamada M."/>
            <person name="Harada C."/>
            <person name="Hijishita S."/>
            <person name="Honda M."/>
            <person name="Ichikawa Y."/>
            <person name="Idonuma A."/>
            <person name="Iijima M."/>
            <person name="Ikeda M."/>
            <person name="Ikeno M."/>
            <person name="Ito S."/>
            <person name="Ito T."/>
            <person name="Ito Y."/>
            <person name="Ito Y."/>
            <person name="Iwabuchi A."/>
            <person name="Kamiya K."/>
            <person name="Karasawa W."/>
            <person name="Katagiri S."/>
            <person name="Kikuta A."/>
            <person name="Kobayashi N."/>
            <person name="Kono I."/>
            <person name="Machita K."/>
            <person name="Maehara T."/>
            <person name="Mizuno H."/>
            <person name="Mizubayashi T."/>
            <person name="Mukai Y."/>
            <person name="Nagasaki H."/>
            <person name="Nakashima M."/>
            <person name="Nakama Y."/>
            <person name="Nakamichi Y."/>
            <person name="Nakamura M."/>
            <person name="Namiki N."/>
            <person name="Negishi M."/>
            <person name="Ohta I."/>
            <person name="Ono N."/>
            <person name="Saji S."/>
            <person name="Sakai K."/>
            <person name="Shibata M."/>
            <person name="Shimokawa T."/>
            <person name="Shomura A."/>
            <person name="Song J."/>
            <person name="Takazaki Y."/>
            <person name="Terasawa K."/>
            <person name="Tsuji K."/>
            <person name="Waki K."/>
            <person name="Yamagata H."/>
            <person name="Yamane H."/>
            <person name="Yoshiki S."/>
            <person name="Yoshihara R."/>
            <person name="Yukawa K."/>
            <person name="Zhong H."/>
            <person name="Iwama H."/>
            <person name="Endo T."/>
            <person name="Ito H."/>
            <person name="Hahn J.H."/>
            <person name="Kim H.-I."/>
            <person name="Eun M.-Y."/>
            <person name="Yano M."/>
            <person name="Jiang J."/>
            <person name="Gojobori T."/>
        </authorList>
    </citation>
    <scope>NUCLEOTIDE SEQUENCE [LARGE SCALE GENOMIC DNA]</scope>
    <source>
        <strain>cv. Nipponbare</strain>
    </source>
</reference>
<reference key="2">
    <citation type="journal article" date="2005" name="Nature">
        <title>The map-based sequence of the rice genome.</title>
        <authorList>
            <consortium name="International rice genome sequencing project (IRGSP)"/>
        </authorList>
    </citation>
    <scope>NUCLEOTIDE SEQUENCE [LARGE SCALE GENOMIC DNA]</scope>
    <source>
        <strain>cv. Nipponbare</strain>
    </source>
</reference>
<reference key="3">
    <citation type="journal article" date="2008" name="Nucleic Acids Res.">
        <title>The rice annotation project database (RAP-DB): 2008 update.</title>
        <authorList>
            <consortium name="The rice annotation project (RAP)"/>
        </authorList>
    </citation>
    <scope>GENOME REANNOTATION</scope>
    <source>
        <strain>cv. Nipponbare</strain>
    </source>
</reference>
<reference key="4">
    <citation type="journal article" date="2013" name="Rice">
        <title>Improvement of the Oryza sativa Nipponbare reference genome using next generation sequence and optical map data.</title>
        <authorList>
            <person name="Kawahara Y."/>
            <person name="de la Bastide M."/>
            <person name="Hamilton J.P."/>
            <person name="Kanamori H."/>
            <person name="McCombie W.R."/>
            <person name="Ouyang S."/>
            <person name="Schwartz D.C."/>
            <person name="Tanaka T."/>
            <person name="Wu J."/>
            <person name="Zhou S."/>
            <person name="Childs K.L."/>
            <person name="Davidson R.M."/>
            <person name="Lin H."/>
            <person name="Quesada-Ocampo L."/>
            <person name="Vaillancourt B."/>
            <person name="Sakai H."/>
            <person name="Lee S.S."/>
            <person name="Kim J."/>
            <person name="Numa H."/>
            <person name="Itoh T."/>
            <person name="Buell C.R."/>
            <person name="Matsumoto T."/>
        </authorList>
    </citation>
    <scope>GENOME REANNOTATION</scope>
    <source>
        <strain>cv. Nipponbare</strain>
    </source>
</reference>
<reference key="5">
    <citation type="journal article" date="2005" name="PLoS Biol.">
        <title>The genomes of Oryza sativa: a history of duplications.</title>
        <authorList>
            <person name="Yu J."/>
            <person name="Wang J."/>
            <person name="Lin W."/>
            <person name="Li S."/>
            <person name="Li H."/>
            <person name="Zhou J."/>
            <person name="Ni P."/>
            <person name="Dong W."/>
            <person name="Hu S."/>
            <person name="Zeng C."/>
            <person name="Zhang J."/>
            <person name="Zhang Y."/>
            <person name="Li R."/>
            <person name="Xu Z."/>
            <person name="Li S."/>
            <person name="Li X."/>
            <person name="Zheng H."/>
            <person name="Cong L."/>
            <person name="Lin L."/>
            <person name="Yin J."/>
            <person name="Geng J."/>
            <person name="Li G."/>
            <person name="Shi J."/>
            <person name="Liu J."/>
            <person name="Lv H."/>
            <person name="Li J."/>
            <person name="Wang J."/>
            <person name="Deng Y."/>
            <person name="Ran L."/>
            <person name="Shi X."/>
            <person name="Wang X."/>
            <person name="Wu Q."/>
            <person name="Li C."/>
            <person name="Ren X."/>
            <person name="Wang J."/>
            <person name="Wang X."/>
            <person name="Li D."/>
            <person name="Liu D."/>
            <person name="Zhang X."/>
            <person name="Ji Z."/>
            <person name="Zhao W."/>
            <person name="Sun Y."/>
            <person name="Zhang Z."/>
            <person name="Bao J."/>
            <person name="Han Y."/>
            <person name="Dong L."/>
            <person name="Ji J."/>
            <person name="Chen P."/>
            <person name="Wu S."/>
            <person name="Liu J."/>
            <person name="Xiao Y."/>
            <person name="Bu D."/>
            <person name="Tan J."/>
            <person name="Yang L."/>
            <person name="Ye C."/>
            <person name="Zhang J."/>
            <person name="Xu J."/>
            <person name="Zhou Y."/>
            <person name="Yu Y."/>
            <person name="Zhang B."/>
            <person name="Zhuang S."/>
            <person name="Wei H."/>
            <person name="Liu B."/>
            <person name="Lei M."/>
            <person name="Yu H."/>
            <person name="Li Y."/>
            <person name="Xu H."/>
            <person name="Wei S."/>
            <person name="He X."/>
            <person name="Fang L."/>
            <person name="Zhang Z."/>
            <person name="Zhang Y."/>
            <person name="Huang X."/>
            <person name="Su Z."/>
            <person name="Tong W."/>
            <person name="Li J."/>
            <person name="Tong Z."/>
            <person name="Li S."/>
            <person name="Ye J."/>
            <person name="Wang L."/>
            <person name="Fang L."/>
            <person name="Lei T."/>
            <person name="Chen C.-S."/>
            <person name="Chen H.-C."/>
            <person name="Xu Z."/>
            <person name="Li H."/>
            <person name="Huang H."/>
            <person name="Zhang F."/>
            <person name="Xu H."/>
            <person name="Li N."/>
            <person name="Zhao C."/>
            <person name="Li S."/>
            <person name="Dong L."/>
            <person name="Huang Y."/>
            <person name="Li L."/>
            <person name="Xi Y."/>
            <person name="Qi Q."/>
            <person name="Li W."/>
            <person name="Zhang B."/>
            <person name="Hu W."/>
            <person name="Zhang Y."/>
            <person name="Tian X."/>
            <person name="Jiao Y."/>
            <person name="Liang X."/>
            <person name="Jin J."/>
            <person name="Gao L."/>
            <person name="Zheng W."/>
            <person name="Hao B."/>
            <person name="Liu S.-M."/>
            <person name="Wang W."/>
            <person name="Yuan L."/>
            <person name="Cao M."/>
            <person name="McDermott J."/>
            <person name="Samudrala R."/>
            <person name="Wang J."/>
            <person name="Wong G.K.-S."/>
            <person name="Yang H."/>
        </authorList>
    </citation>
    <scope>NUCLEOTIDE SEQUENCE [LARGE SCALE GENOMIC DNA]</scope>
    <source>
        <strain>cv. Nipponbare</strain>
    </source>
</reference>
<reference key="6">
    <citation type="journal article" date="2005" name="J. Mol. Evol.">
        <title>Evolution of NIN-like proteins in Arabidopsis, rice, and Lotus japonicus.</title>
        <authorList>
            <person name="Schauser L."/>
            <person name="Wieloch W."/>
            <person name="Stougaard J."/>
        </authorList>
    </citation>
    <scope>GENE FAMILY</scope>
    <scope>NOMENCLATURE</scope>
</reference>
<organism>
    <name type="scientific">Oryza sativa subsp. japonica</name>
    <name type="common">Rice</name>
    <dbReference type="NCBI Taxonomy" id="39947"/>
    <lineage>
        <taxon>Eukaryota</taxon>
        <taxon>Viridiplantae</taxon>
        <taxon>Streptophyta</taxon>
        <taxon>Embryophyta</taxon>
        <taxon>Tracheophyta</taxon>
        <taxon>Spermatophyta</taxon>
        <taxon>Magnoliopsida</taxon>
        <taxon>Liliopsida</taxon>
        <taxon>Poales</taxon>
        <taxon>Poaceae</taxon>
        <taxon>BOP clade</taxon>
        <taxon>Oryzoideae</taxon>
        <taxon>Oryzeae</taxon>
        <taxon>Oryzinae</taxon>
        <taxon>Oryza</taxon>
        <taxon>Oryza sativa</taxon>
    </lineage>
</organism>
<sequence length="938" mass="102439">MEVDPSSSLPGAGEGGGGGIGGGGGDLWPFDSLTTSLLFSSVSASPQPLPASSSSWLTPPSPLWLFDERQLLPLDMGAPAAPATAPPAEAAAVVEEVHRTRSGNSDTTSKRVDQINSKWQFHLSIDDNTDSSCLFKERLTQALRYFKESTDQHLLVQVWAPVKSGDRYVLTTSGQPFVLDQQSIGLLQYRAVSMMYMFSVDGENAGELGLPGRVYKQKVPEWTPNVQYYSSTEYPRLNHAISYNVHGTVALPVFDPSVQNCIAVVELIMTSKKINYAGEVDKVCKALEAVNLKSTEILDHPNVQICNEGRQSALVEILEILTVVCEEHKLPLAQTWVPCKYRSVLAHGGGVKKSCLSFDGSCMGEVCMSTSDVAFHVIDAHMWGFRDACVEHHLQKGQGVSGKAFIYRRPCFSKDISQFCKLEYPLVHYARMFGLAGCFAICLQSMYTGDDDYILEFFLPPNCRNEDDQNALLESILARMKKCLRTLKVVGNGDTNEVCLQISNVLIIETEDLKTNVHFENSEGCFRESPESNGSQRVHEVDNDGNKVSIMSERHLLADDNSQNNGASVGRPNGSGASDSLHKSNKPPERRRGKAEKTISLDVLQQYFSGSLKNAAKSLGVCPTTMKRICRQHGISRWPSRKINKVNRSLSKLKQVIESVQGSDAAFNLTSITGPLPIPVGPSSDSQNLEKASPNKVAELSNLAVEGDRDSSLQKPIENDNLAILMSQQGFIDANNNLQLEADKASHSRSSSGEGSINSRTSEASCHGSPANQTFVCKPIASTFAEPQLIPEAFTKEPFQEPALPLSRMLIEDSGSSKDLKNLFTSAVDQPFLARSSNLALMQNSGTVTIKASFKEDIVRFRFPCSGSVTALKDEVAKRLRMDVGMFDIKYLDDDHEWVKLACNADLEECMEISGSHVIRLLVSDVAAHLGSSCGSSG</sequence>
<feature type="chain" id="PRO_0000401502" description="Protein NLP3">
    <location>
        <begin position="1"/>
        <end position="938"/>
    </location>
</feature>
<feature type="domain" description="RWP-RK" evidence="3">
    <location>
        <begin position="585"/>
        <end position="666"/>
    </location>
</feature>
<feature type="domain" description="PB1" evidence="4">
    <location>
        <begin position="847"/>
        <end position="926"/>
    </location>
</feature>
<feature type="region of interest" description="Disordered" evidence="5">
    <location>
        <begin position="1"/>
        <end position="26"/>
    </location>
</feature>
<feature type="region of interest" description="Disordered" evidence="5">
    <location>
        <begin position="557"/>
        <end position="597"/>
    </location>
</feature>
<feature type="region of interest" description="Disordered" evidence="5">
    <location>
        <begin position="743"/>
        <end position="769"/>
    </location>
</feature>
<feature type="coiled-coil region" evidence="2">
    <location>
        <begin position="640"/>
        <end position="662"/>
    </location>
</feature>
<feature type="compositionally biased region" description="Gly residues" evidence="5">
    <location>
        <begin position="12"/>
        <end position="26"/>
    </location>
</feature>
<feature type="compositionally biased region" description="Basic and acidic residues" evidence="5">
    <location>
        <begin position="580"/>
        <end position="597"/>
    </location>
</feature>
<feature type="compositionally biased region" description="Low complexity" evidence="5">
    <location>
        <begin position="748"/>
        <end position="762"/>
    </location>
</feature>
<gene>
    <name type="primary">NLP3</name>
    <name type="ordered locus">Os01g0236700</name>
    <name type="ordered locus">LOC_Os01g13540</name>
    <name type="ORF">OsJ_01032</name>
    <name type="ORF">P0708G02.34</name>
</gene>
<proteinExistence type="inferred from homology"/>
<accession>Q5NB82</accession>
<accession>A0A0P0V0A4</accession>
<protein>
    <recommendedName>
        <fullName>Protein NLP3</fullName>
        <shortName>AtNLP3</shortName>
    </recommendedName>
    <alternativeName>
        <fullName>NIN-like protein 3</fullName>
    </alternativeName>
    <alternativeName>
        <fullName>Nodule inception protein-like protein 3</fullName>
    </alternativeName>
</protein>
<name>NLP3_ORYSJ</name>
<evidence type="ECO:0000250" key="1"/>
<evidence type="ECO:0000255" key="2"/>
<evidence type="ECO:0000255" key="3">
    <source>
        <dbReference type="PROSITE-ProRule" id="PRU00852"/>
    </source>
</evidence>
<evidence type="ECO:0000255" key="4">
    <source>
        <dbReference type="PROSITE-ProRule" id="PRU01081"/>
    </source>
</evidence>
<evidence type="ECO:0000256" key="5">
    <source>
        <dbReference type="SAM" id="MobiDB-lite"/>
    </source>
</evidence>
<comment type="function">
    <text evidence="1">Probable transcription factor.</text>
</comment>
<comment type="subcellular location">
    <subcellularLocation>
        <location evidence="3">Nucleus</location>
    </subcellularLocation>
</comment>